<feature type="chain" id="PRO_0000201493" description="Glycine betaine transporter OpuD">
    <location>
        <begin position="1"/>
        <end position="512"/>
    </location>
</feature>
<feature type="transmembrane region" description="Helical" evidence="1">
    <location>
        <begin position="5"/>
        <end position="25"/>
    </location>
</feature>
<feature type="transmembrane region" description="Helical" evidence="1">
    <location>
        <begin position="45"/>
        <end position="65"/>
    </location>
</feature>
<feature type="transmembrane region" description="Helical" evidence="1">
    <location>
        <begin position="82"/>
        <end position="102"/>
    </location>
</feature>
<feature type="transmembrane region" description="Helical" evidence="1">
    <location>
        <begin position="135"/>
        <end position="155"/>
    </location>
</feature>
<feature type="transmembrane region" description="Helical" evidence="1">
    <location>
        <begin position="186"/>
        <end position="206"/>
    </location>
</feature>
<feature type="transmembrane region" description="Helical" evidence="1">
    <location>
        <begin position="222"/>
        <end position="242"/>
    </location>
</feature>
<feature type="transmembrane region" description="Helical" evidence="1">
    <location>
        <begin position="257"/>
        <end position="277"/>
    </location>
</feature>
<feature type="transmembrane region" description="Helical" evidence="1">
    <location>
        <begin position="312"/>
        <end position="332"/>
    </location>
</feature>
<feature type="transmembrane region" description="Helical" evidence="1">
    <location>
        <begin position="343"/>
        <end position="363"/>
    </location>
</feature>
<feature type="transmembrane region" description="Helical" evidence="1">
    <location>
        <begin position="395"/>
        <end position="415"/>
    </location>
</feature>
<feature type="transmembrane region" description="Helical" evidence="1">
    <location>
        <begin position="441"/>
        <end position="461"/>
    </location>
</feature>
<feature type="transmembrane region" description="Helical" evidence="1">
    <location>
        <begin position="464"/>
        <end position="484"/>
    </location>
</feature>
<gene>
    <name type="primary">opuD</name>
    <name type="synonym">ytfQ</name>
    <name type="ordered locus">BSU30070</name>
</gene>
<comment type="function">
    <text evidence="2">High-affinity uptake of glycine betaine. Does not mediate either carnitine or choline uptake.</text>
</comment>
<comment type="activity regulation">
    <text evidence="4">Activity is stimulated by high osmolarity.</text>
</comment>
<comment type="subcellular location">
    <subcellularLocation>
        <location evidence="3">Cell membrane</location>
        <topology evidence="3">Multi-pass membrane protein</topology>
    </subcellularLocation>
</comment>
<comment type="induction">
    <text evidence="4">Induced by high osmolarity.</text>
</comment>
<comment type="similarity">
    <text evidence="3">Belongs to the BCCT transporter (TC 2.A.15) family.</text>
</comment>
<keyword id="KW-1003">Cell membrane</keyword>
<keyword id="KW-0472">Membrane</keyword>
<keyword id="KW-1185">Reference proteome</keyword>
<keyword id="KW-0812">Transmembrane</keyword>
<keyword id="KW-1133">Transmembrane helix</keyword>
<keyword id="KW-0813">Transport</keyword>
<reference key="1">
    <citation type="journal article" date="1996" name="J. Bacteriol.">
        <title>Three transport systems for the osmoprotectant glycine betaine operate in Bacillus subtilis: characterization of OpuD.</title>
        <authorList>
            <person name="Kappes R."/>
            <person name="Kempf B."/>
            <person name="Bremer E."/>
        </authorList>
    </citation>
    <scope>NUCLEOTIDE SEQUENCE [GENOMIC DNA]</scope>
    <scope>FUNCTION IN GLYCINE BETAINE TRANSPORT</scope>
    <scope>ACTIVITY REGULATION</scope>
    <scope>INDUCTION</scope>
    <scope>GENE NAME</scope>
    <source>
        <strain>168 / JH642</strain>
    </source>
</reference>
<reference key="2">
    <citation type="journal article" date="1997" name="Microbiology">
        <title>Sequencing and functional annotation of the Bacillus subtilis genes in the 200 kb rrnB-dnaB region.</title>
        <authorList>
            <person name="Lapidus A."/>
            <person name="Galleron N."/>
            <person name="Sorokin A."/>
            <person name="Ehrlich S.D."/>
        </authorList>
    </citation>
    <scope>NUCLEOTIDE SEQUENCE [GENOMIC DNA]</scope>
    <source>
        <strain>168</strain>
    </source>
</reference>
<reference key="3">
    <citation type="journal article" date="1997" name="Nature">
        <title>The complete genome sequence of the Gram-positive bacterium Bacillus subtilis.</title>
        <authorList>
            <person name="Kunst F."/>
            <person name="Ogasawara N."/>
            <person name="Moszer I."/>
            <person name="Albertini A.M."/>
            <person name="Alloni G."/>
            <person name="Azevedo V."/>
            <person name="Bertero M.G."/>
            <person name="Bessieres P."/>
            <person name="Bolotin A."/>
            <person name="Borchert S."/>
            <person name="Borriss R."/>
            <person name="Boursier L."/>
            <person name="Brans A."/>
            <person name="Braun M."/>
            <person name="Brignell S.C."/>
            <person name="Bron S."/>
            <person name="Brouillet S."/>
            <person name="Bruschi C.V."/>
            <person name="Caldwell B."/>
            <person name="Capuano V."/>
            <person name="Carter N.M."/>
            <person name="Choi S.-K."/>
            <person name="Codani J.-J."/>
            <person name="Connerton I.F."/>
            <person name="Cummings N.J."/>
            <person name="Daniel R.A."/>
            <person name="Denizot F."/>
            <person name="Devine K.M."/>
            <person name="Duesterhoeft A."/>
            <person name="Ehrlich S.D."/>
            <person name="Emmerson P.T."/>
            <person name="Entian K.-D."/>
            <person name="Errington J."/>
            <person name="Fabret C."/>
            <person name="Ferrari E."/>
            <person name="Foulger D."/>
            <person name="Fritz C."/>
            <person name="Fujita M."/>
            <person name="Fujita Y."/>
            <person name="Fuma S."/>
            <person name="Galizzi A."/>
            <person name="Galleron N."/>
            <person name="Ghim S.-Y."/>
            <person name="Glaser P."/>
            <person name="Goffeau A."/>
            <person name="Golightly E.J."/>
            <person name="Grandi G."/>
            <person name="Guiseppi G."/>
            <person name="Guy B.J."/>
            <person name="Haga K."/>
            <person name="Haiech J."/>
            <person name="Harwood C.R."/>
            <person name="Henaut A."/>
            <person name="Hilbert H."/>
            <person name="Holsappel S."/>
            <person name="Hosono S."/>
            <person name="Hullo M.-F."/>
            <person name="Itaya M."/>
            <person name="Jones L.-M."/>
            <person name="Joris B."/>
            <person name="Karamata D."/>
            <person name="Kasahara Y."/>
            <person name="Klaerr-Blanchard M."/>
            <person name="Klein C."/>
            <person name="Kobayashi Y."/>
            <person name="Koetter P."/>
            <person name="Koningstein G."/>
            <person name="Krogh S."/>
            <person name="Kumano M."/>
            <person name="Kurita K."/>
            <person name="Lapidus A."/>
            <person name="Lardinois S."/>
            <person name="Lauber J."/>
            <person name="Lazarevic V."/>
            <person name="Lee S.-M."/>
            <person name="Levine A."/>
            <person name="Liu H."/>
            <person name="Masuda S."/>
            <person name="Mauel C."/>
            <person name="Medigue C."/>
            <person name="Medina N."/>
            <person name="Mellado R.P."/>
            <person name="Mizuno M."/>
            <person name="Moestl D."/>
            <person name="Nakai S."/>
            <person name="Noback M."/>
            <person name="Noone D."/>
            <person name="O'Reilly M."/>
            <person name="Ogawa K."/>
            <person name="Ogiwara A."/>
            <person name="Oudega B."/>
            <person name="Park S.-H."/>
            <person name="Parro V."/>
            <person name="Pohl T.M."/>
            <person name="Portetelle D."/>
            <person name="Porwollik S."/>
            <person name="Prescott A.M."/>
            <person name="Presecan E."/>
            <person name="Pujic P."/>
            <person name="Purnelle B."/>
            <person name="Rapoport G."/>
            <person name="Rey M."/>
            <person name="Reynolds S."/>
            <person name="Rieger M."/>
            <person name="Rivolta C."/>
            <person name="Rocha E."/>
            <person name="Roche B."/>
            <person name="Rose M."/>
            <person name="Sadaie Y."/>
            <person name="Sato T."/>
            <person name="Scanlan E."/>
            <person name="Schleich S."/>
            <person name="Schroeter R."/>
            <person name="Scoffone F."/>
            <person name="Sekiguchi J."/>
            <person name="Sekowska A."/>
            <person name="Seror S.J."/>
            <person name="Serror P."/>
            <person name="Shin B.-S."/>
            <person name="Soldo B."/>
            <person name="Sorokin A."/>
            <person name="Tacconi E."/>
            <person name="Takagi T."/>
            <person name="Takahashi H."/>
            <person name="Takemaru K."/>
            <person name="Takeuchi M."/>
            <person name="Tamakoshi A."/>
            <person name="Tanaka T."/>
            <person name="Terpstra P."/>
            <person name="Tognoni A."/>
            <person name="Tosato V."/>
            <person name="Uchiyama S."/>
            <person name="Vandenbol M."/>
            <person name="Vannier F."/>
            <person name="Vassarotti A."/>
            <person name="Viari A."/>
            <person name="Wambutt R."/>
            <person name="Wedler E."/>
            <person name="Wedler H."/>
            <person name="Weitzenegger T."/>
            <person name="Winters P."/>
            <person name="Wipat A."/>
            <person name="Yamamoto H."/>
            <person name="Yamane K."/>
            <person name="Yasumoto K."/>
            <person name="Yata K."/>
            <person name="Yoshida K."/>
            <person name="Yoshikawa H.-F."/>
            <person name="Zumstein E."/>
            <person name="Yoshikawa H."/>
            <person name="Danchin A."/>
        </authorList>
    </citation>
    <scope>NUCLEOTIDE SEQUENCE [LARGE SCALE GENOMIC DNA]</scope>
    <source>
        <strain>168</strain>
    </source>
</reference>
<name>OPUD_BACSU</name>
<dbReference type="EMBL" id="U50082">
    <property type="protein sequence ID" value="AAC44368.1"/>
    <property type="molecule type" value="Genomic_DNA"/>
</dbReference>
<dbReference type="EMBL" id="AF008220">
    <property type="protein sequence ID" value="AAC00408.1"/>
    <property type="molecule type" value="Genomic_DNA"/>
</dbReference>
<dbReference type="EMBL" id="AL009126">
    <property type="protein sequence ID" value="CAB14985.1"/>
    <property type="molecule type" value="Genomic_DNA"/>
</dbReference>
<dbReference type="PIR" id="G69670">
    <property type="entry name" value="G69670"/>
</dbReference>
<dbReference type="RefSeq" id="NP_390885.1">
    <property type="nucleotide sequence ID" value="NC_000964.3"/>
</dbReference>
<dbReference type="RefSeq" id="WP_003229220.1">
    <property type="nucleotide sequence ID" value="NZ_OZ025638.1"/>
</dbReference>
<dbReference type="SMR" id="P54417"/>
<dbReference type="FunCoup" id="P54417">
    <property type="interactions" value="106"/>
</dbReference>
<dbReference type="STRING" id="224308.BSU30070"/>
<dbReference type="TCDB" id="2.A.15.1.1">
    <property type="family name" value="the betaine/carnitine/choline transporter (bcct) family"/>
</dbReference>
<dbReference type="PaxDb" id="224308-BSU30070"/>
<dbReference type="EnsemblBacteria" id="CAB14985">
    <property type="protein sequence ID" value="CAB14985"/>
    <property type="gene ID" value="BSU_30070"/>
</dbReference>
<dbReference type="GeneID" id="937986"/>
<dbReference type="KEGG" id="bsu:BSU30070"/>
<dbReference type="PATRIC" id="fig|224308.179.peg.3264"/>
<dbReference type="eggNOG" id="COG1292">
    <property type="taxonomic scope" value="Bacteria"/>
</dbReference>
<dbReference type="InParanoid" id="P54417"/>
<dbReference type="OrthoDB" id="9775735at2"/>
<dbReference type="PhylomeDB" id="P54417"/>
<dbReference type="BioCyc" id="BSUB:BSU30070-MONOMER"/>
<dbReference type="Proteomes" id="UP000001570">
    <property type="component" value="Chromosome"/>
</dbReference>
<dbReference type="GO" id="GO:0005886">
    <property type="term" value="C:plasma membrane"/>
    <property type="evidence" value="ECO:0000318"/>
    <property type="project" value="GO_Central"/>
</dbReference>
<dbReference type="GO" id="GO:0022857">
    <property type="term" value="F:transmembrane transporter activity"/>
    <property type="evidence" value="ECO:0000318"/>
    <property type="project" value="GO_Central"/>
</dbReference>
<dbReference type="GO" id="GO:0031460">
    <property type="term" value="P:glycine betaine transport"/>
    <property type="evidence" value="ECO:0000315"/>
    <property type="project" value="CACAO"/>
</dbReference>
<dbReference type="InterPro" id="IPR018093">
    <property type="entry name" value="BCCT_CS"/>
</dbReference>
<dbReference type="InterPro" id="IPR000060">
    <property type="entry name" value="BCCT_transptr"/>
</dbReference>
<dbReference type="NCBIfam" id="TIGR00842">
    <property type="entry name" value="bcct"/>
    <property type="match status" value="1"/>
</dbReference>
<dbReference type="PANTHER" id="PTHR30047:SF7">
    <property type="entry name" value="HIGH-AFFINITY CHOLINE TRANSPORT PROTEIN"/>
    <property type="match status" value="1"/>
</dbReference>
<dbReference type="PANTHER" id="PTHR30047">
    <property type="entry name" value="HIGH-AFFINITY CHOLINE TRANSPORT PROTEIN-RELATED"/>
    <property type="match status" value="1"/>
</dbReference>
<dbReference type="Pfam" id="PF02028">
    <property type="entry name" value="BCCT"/>
    <property type="match status" value="1"/>
</dbReference>
<dbReference type="PROSITE" id="PS01303">
    <property type="entry name" value="BCCT"/>
    <property type="match status" value="1"/>
</dbReference>
<sequence length="512" mass="56122">MLKHISSVFWIVIAITAAAVLWGVISPDSLQNVSQSAQAFITDSFGWYYLLVVSLFVGFCLFLIFSPIGKIKLGKPDEKPEFGLLSWFAMLFSAGMGIGLVFYGAAEPISHYAISSPSGETETPQAFRDALRYTFFHWGLHAWAIYAIVALCIAYFQFRKGAPGLISSTLSPILGDKVNGPIGKAIDCIAVFATVVGVSTSLGLGATQINGGLNYLFGIPNAFIVQLVLIIIVTVLFLLSAWSGLGKGIKYLSNTNMVLAGLLMLFMLVVGPTVLIMNSFTDSIGQYIQNIVQMSFRLTPNDPEKREWINSWTIFYWAWWISWSPFVGIFIARVSRGRTIREFLIGVLVTPCILTFLWFSIFGVSAMDLQQKGAFNVAKLSTETMLFGTLDHYPLTMVTSILALILIAVFFITSADSATFVLGMQTSYGSLNPANSVKLSWGIIQSAMAAVLLYSGGLAALQNTAILAALPFSIVILLMIASLYQSLSKERREIKKAEKLDKPRSPRVKKAY</sequence>
<organism>
    <name type="scientific">Bacillus subtilis (strain 168)</name>
    <dbReference type="NCBI Taxonomy" id="224308"/>
    <lineage>
        <taxon>Bacteria</taxon>
        <taxon>Bacillati</taxon>
        <taxon>Bacillota</taxon>
        <taxon>Bacilli</taxon>
        <taxon>Bacillales</taxon>
        <taxon>Bacillaceae</taxon>
        <taxon>Bacillus</taxon>
    </lineage>
</organism>
<evidence type="ECO:0000255" key="1"/>
<evidence type="ECO:0000269" key="2">
    <source>
    </source>
</evidence>
<evidence type="ECO:0000305" key="3"/>
<evidence type="ECO:0000305" key="4">
    <source>
    </source>
</evidence>
<proteinExistence type="evidence at protein level"/>
<protein>
    <recommendedName>
        <fullName>Glycine betaine transporter OpuD</fullName>
    </recommendedName>
</protein>
<accession>P54417</accession>